<feature type="transit peptide" description="Mitochondrion" evidence="3">
    <location>
        <begin position="1"/>
        <end position="16"/>
    </location>
</feature>
<feature type="chain" id="PRO_0000033265" description="Single-stranded DNA-binding protein, mitochondrial">
    <location>
        <begin position="17"/>
        <end position="151"/>
    </location>
</feature>
<feature type="domain" description="SSB">
    <location>
        <begin position="30"/>
        <end position="141"/>
    </location>
</feature>
<feature type="modified residue" description="Phosphoserine" evidence="2">
    <location>
        <position position="67"/>
    </location>
</feature>
<feature type="modified residue" description="Phosphoserine" evidence="1">
    <location>
        <position position="79"/>
    </location>
</feature>
<feature type="modified residue" description="N6-acetyllysine" evidence="1">
    <location>
        <position position="113"/>
    </location>
</feature>
<feature type="modified residue" description="N6-succinyllysine" evidence="2">
    <location>
        <position position="122"/>
    </location>
</feature>
<gene>
    <name type="primary">Ssbp1</name>
    <name type="synonym">Ssbp</name>
</gene>
<protein>
    <recommendedName>
        <fullName>Single-stranded DNA-binding protein, mitochondrial</fullName>
        <shortName>Mt-SSB</shortName>
        <shortName>MtSSB</shortName>
    </recommendedName>
    <alternativeName>
        <fullName>Single strand DNA-binding protein P16</fullName>
    </alternativeName>
</protein>
<comment type="function">
    <text evidence="1">Binds preferentially and cooperatively to pyrimidine rich single-stranded DNA (ss-DNA). In vitro, required to maintain the copy number of mitochondrial DNA (mtDNA) and plays a crucial role during mtDNA replication by stimulating the activity of the replisome components POLG and TWNK at the replication fork. Promotes the activity of the gamma complex polymerase POLG, largely by organizing the template DNA and eliminating secondary structures to favor ss-DNA conformations that facilitate POLG activity. In addition it is able to promote the 5'-3' unwinding activity of the mtDNA helicase TWNK. May also function in mtDNA repair.</text>
</comment>
<comment type="subunit">
    <text evidence="1">Homotetramer. Interacts with MPG/AAG, through inhibition of its glycosylase activity it potentially prevents formation of DNA breaks in ssDNA, ensuring that base removal primarily occurs in dsDNA. Interacts with POLDIP2. Interacts with PRIMPOL.</text>
</comment>
<comment type="subcellular location">
    <subcellularLocation>
        <location evidence="1">Mitochondrion</location>
    </subcellularLocation>
    <subcellularLocation>
        <location evidence="1">Mitochondrion matrix</location>
        <location evidence="1">Mitochondrion nucleoid</location>
    </subcellularLocation>
</comment>
<name>SSBP_RAT</name>
<accession>P28042</accession>
<keyword id="KW-0007">Acetylation</keyword>
<keyword id="KW-0903">Direct protein sequencing</keyword>
<keyword id="KW-0235">DNA replication</keyword>
<keyword id="KW-0238">DNA-binding</keyword>
<keyword id="KW-0496">Mitochondrion</keyword>
<keyword id="KW-1135">Mitochondrion nucleoid</keyword>
<keyword id="KW-0597">Phosphoprotein</keyword>
<keyword id="KW-1185">Reference proteome</keyword>
<keyword id="KW-0809">Transit peptide</keyword>
<proteinExistence type="evidence at protein level"/>
<evidence type="ECO:0000250" key="1">
    <source>
        <dbReference type="UniProtKB" id="Q04837"/>
    </source>
</evidence>
<evidence type="ECO:0000250" key="2">
    <source>
        <dbReference type="UniProtKB" id="Q9CYR0"/>
    </source>
</evidence>
<evidence type="ECO:0000269" key="3">
    <source>
    </source>
</evidence>
<reference key="1">
    <citation type="journal article" date="1993" name="Gene">
        <title>Cloning of human and rat cDNAs encoding the mitochondrial single-stranded DNA-binding protein (SSB).</title>
        <authorList>
            <person name="Tiranti V."/>
            <person name="Rocchi M."/>
            <person name="Didonato S."/>
            <person name="Zeviani M."/>
        </authorList>
    </citation>
    <scope>NUCLEOTIDE SEQUENCE [MRNA]</scope>
    <source>
        <tissue>Liver</tissue>
    </source>
</reference>
<reference key="2">
    <citation type="journal article" date="1998" name="Gene">
        <title>The gene and processed pseudogenes of the rat mitochondrial single-strand DNA-binding protein: structure and promoter strength analyses.</title>
        <authorList>
            <person name="Gupta S."/>
            <person name="van Tuyle G.C."/>
        </authorList>
    </citation>
    <scope>NUCLEOTIDE SEQUENCE [GENOMIC DNA]</scope>
    <source>
        <strain>Sprague-Dawley</strain>
    </source>
</reference>
<reference key="3">
    <citation type="journal article" date="1990" name="Arch. Biochem. Biophys.">
        <title>Structural and functional studies of the rat mitochondrial single strand DNA binding protein P16.</title>
        <authorList>
            <person name="Hoke G.D."/>
            <person name="Pavco P.A."/>
            <person name="Ledwith B.J."/>
            <person name="van Tuyle G.C."/>
        </authorList>
    </citation>
    <scope>PROTEIN SEQUENCE OF 17-46</scope>
</reference>
<organism>
    <name type="scientific">Rattus norvegicus</name>
    <name type="common">Rat</name>
    <dbReference type="NCBI Taxonomy" id="10116"/>
    <lineage>
        <taxon>Eukaryota</taxon>
        <taxon>Metazoa</taxon>
        <taxon>Chordata</taxon>
        <taxon>Craniata</taxon>
        <taxon>Vertebrata</taxon>
        <taxon>Euteleostomi</taxon>
        <taxon>Mammalia</taxon>
        <taxon>Eutheria</taxon>
        <taxon>Euarchontoglires</taxon>
        <taxon>Glires</taxon>
        <taxon>Rodentia</taxon>
        <taxon>Myomorpha</taxon>
        <taxon>Muroidea</taxon>
        <taxon>Muridae</taxon>
        <taxon>Murinae</taxon>
        <taxon>Rattus</taxon>
    </lineage>
</organism>
<sequence length="151" mass="17455">MFRRPVLQVFRQFVRQESEVASSLVLERSLNRVQLLGRVGQDPVMRQVEGKNPVTIFSLATNEMWRSGDNEAYQMGDVSQKTTWHRISVFRPGLRDVAYQYVKKGARIFVEGKVDYGEYMDKNNVRRQATTIIADNIIFLSDQAREKPLNG</sequence>
<dbReference type="EMBL" id="M94557">
    <property type="protein sequence ID" value="AAA67315.1"/>
    <property type="molecule type" value="mRNA"/>
</dbReference>
<dbReference type="EMBL" id="AF043635">
    <property type="protein sequence ID" value="AAC18063.1"/>
    <property type="molecule type" value="Genomic_DNA"/>
</dbReference>
<dbReference type="EMBL" id="AF043630">
    <property type="protein sequence ID" value="AAC18063.1"/>
    <property type="status" value="JOINED"/>
    <property type="molecule type" value="Genomic_DNA"/>
</dbReference>
<dbReference type="EMBL" id="AF043631">
    <property type="protein sequence ID" value="AAC18063.1"/>
    <property type="status" value="JOINED"/>
    <property type="molecule type" value="Genomic_DNA"/>
</dbReference>
<dbReference type="EMBL" id="AF043632">
    <property type="protein sequence ID" value="AAC18063.1"/>
    <property type="status" value="JOINED"/>
    <property type="molecule type" value="Genomic_DNA"/>
</dbReference>
<dbReference type="EMBL" id="AF043633">
    <property type="protein sequence ID" value="AAC18063.1"/>
    <property type="status" value="JOINED"/>
    <property type="molecule type" value="Genomic_DNA"/>
</dbReference>
<dbReference type="EMBL" id="AF043634">
    <property type="protein sequence ID" value="AAC18063.1"/>
    <property type="status" value="JOINED"/>
    <property type="molecule type" value="Genomic_DNA"/>
</dbReference>
<dbReference type="PIR" id="JN0569">
    <property type="entry name" value="JN0569"/>
</dbReference>
<dbReference type="SMR" id="P28042"/>
<dbReference type="BioGRID" id="248524">
    <property type="interactions" value="1"/>
</dbReference>
<dbReference type="FunCoup" id="P28042">
    <property type="interactions" value="1904"/>
</dbReference>
<dbReference type="IntAct" id="P28042">
    <property type="interactions" value="1"/>
</dbReference>
<dbReference type="STRING" id="10116.ENSRNOP00000016217"/>
<dbReference type="iPTMnet" id="P28042"/>
<dbReference type="PhosphoSitePlus" id="P28042"/>
<dbReference type="jPOST" id="P28042"/>
<dbReference type="PaxDb" id="10116-ENSRNOP00000016217"/>
<dbReference type="UCSC" id="RGD:3760">
    <property type="organism name" value="rat"/>
</dbReference>
<dbReference type="AGR" id="RGD:3760"/>
<dbReference type="RGD" id="3760">
    <property type="gene designation" value="Ssbp1"/>
</dbReference>
<dbReference type="eggNOG" id="KOG1653">
    <property type="taxonomic scope" value="Eukaryota"/>
</dbReference>
<dbReference type="InParanoid" id="P28042"/>
<dbReference type="PhylomeDB" id="P28042"/>
<dbReference type="Reactome" id="R-RNO-9837999">
    <property type="pathway name" value="Mitochondrial protein degradation"/>
</dbReference>
<dbReference type="Reactome" id="R-RNO-9913635">
    <property type="pathway name" value="Strand-asynchronous mitochondrial DNA replication"/>
</dbReference>
<dbReference type="PRO" id="PR:P28042"/>
<dbReference type="Proteomes" id="UP000002494">
    <property type="component" value="Unplaced"/>
</dbReference>
<dbReference type="GO" id="GO:0042645">
    <property type="term" value="C:mitochondrial nucleoid"/>
    <property type="evidence" value="ECO:0000250"/>
    <property type="project" value="UniProtKB"/>
</dbReference>
<dbReference type="GO" id="GO:0005739">
    <property type="term" value="C:mitochondrion"/>
    <property type="evidence" value="ECO:0000250"/>
    <property type="project" value="UniProtKB"/>
</dbReference>
<dbReference type="GO" id="GO:0003682">
    <property type="term" value="F:chromatin binding"/>
    <property type="evidence" value="ECO:0000266"/>
    <property type="project" value="RGD"/>
</dbReference>
<dbReference type="GO" id="GO:0008047">
    <property type="term" value="F:enzyme activator activity"/>
    <property type="evidence" value="ECO:0000318"/>
    <property type="project" value="GO_Central"/>
</dbReference>
<dbReference type="GO" id="GO:0042802">
    <property type="term" value="F:identical protein binding"/>
    <property type="evidence" value="ECO:0000266"/>
    <property type="project" value="RGD"/>
</dbReference>
<dbReference type="GO" id="GO:0042803">
    <property type="term" value="F:protein homodimerization activity"/>
    <property type="evidence" value="ECO:0000266"/>
    <property type="project" value="RGD"/>
</dbReference>
<dbReference type="GO" id="GO:0003697">
    <property type="term" value="F:single-stranded DNA binding"/>
    <property type="evidence" value="ECO:0000250"/>
    <property type="project" value="UniProtKB"/>
</dbReference>
<dbReference type="GO" id="GO:0006260">
    <property type="term" value="P:DNA replication"/>
    <property type="evidence" value="ECO:0000318"/>
    <property type="project" value="GO_Central"/>
</dbReference>
<dbReference type="GO" id="GO:0006261">
    <property type="term" value="P:DNA-templated DNA replication"/>
    <property type="evidence" value="ECO:0000266"/>
    <property type="project" value="RGD"/>
</dbReference>
<dbReference type="GO" id="GO:0000002">
    <property type="term" value="P:mitochondrial genome maintenance"/>
    <property type="evidence" value="ECO:0000318"/>
    <property type="project" value="GO_Central"/>
</dbReference>
<dbReference type="GO" id="GO:0007005">
    <property type="term" value="P:mitochondrion organization"/>
    <property type="evidence" value="ECO:0000266"/>
    <property type="project" value="RGD"/>
</dbReference>
<dbReference type="GO" id="GO:0090297">
    <property type="term" value="P:positive regulation of mitochondrial DNA replication"/>
    <property type="evidence" value="ECO:0000250"/>
    <property type="project" value="UniProtKB"/>
</dbReference>
<dbReference type="GO" id="GO:0051289">
    <property type="term" value="P:protein homotetramerization"/>
    <property type="evidence" value="ECO:0000250"/>
    <property type="project" value="UniProtKB"/>
</dbReference>
<dbReference type="CDD" id="cd04496">
    <property type="entry name" value="SSB_OBF"/>
    <property type="match status" value="1"/>
</dbReference>
<dbReference type="FunFam" id="2.40.50.140:FF:000129">
    <property type="entry name" value="Single-stranded DNA-binding protein 1, mitochondrial"/>
    <property type="match status" value="1"/>
</dbReference>
<dbReference type="Gene3D" id="2.40.50.140">
    <property type="entry name" value="Nucleic acid-binding proteins"/>
    <property type="match status" value="1"/>
</dbReference>
<dbReference type="HAMAP" id="MF_00984">
    <property type="entry name" value="SSB"/>
    <property type="match status" value="1"/>
</dbReference>
<dbReference type="InterPro" id="IPR012340">
    <property type="entry name" value="NA-bd_OB-fold"/>
</dbReference>
<dbReference type="InterPro" id="IPR000424">
    <property type="entry name" value="Primosome_PriB/ssb"/>
</dbReference>
<dbReference type="InterPro" id="IPR011344">
    <property type="entry name" value="ssDNA-bd"/>
</dbReference>
<dbReference type="NCBIfam" id="TIGR00621">
    <property type="entry name" value="ssb"/>
    <property type="match status" value="1"/>
</dbReference>
<dbReference type="PANTHER" id="PTHR10302">
    <property type="entry name" value="SINGLE-STRANDED DNA-BINDING PROTEIN"/>
    <property type="match status" value="1"/>
</dbReference>
<dbReference type="PANTHER" id="PTHR10302:SF0">
    <property type="entry name" value="SINGLE-STRANDED DNA-BINDING PROTEIN, MITOCHONDRIAL"/>
    <property type="match status" value="1"/>
</dbReference>
<dbReference type="Pfam" id="PF00436">
    <property type="entry name" value="SSB"/>
    <property type="match status" value="1"/>
</dbReference>
<dbReference type="SUPFAM" id="SSF50249">
    <property type="entry name" value="Nucleic acid-binding proteins"/>
    <property type="match status" value="1"/>
</dbReference>
<dbReference type="PROSITE" id="PS50935">
    <property type="entry name" value="SSB"/>
    <property type="match status" value="1"/>
</dbReference>